<gene>
    <name evidence="1" type="primary">pheS</name>
    <name type="ordered locus">Tola_1726</name>
</gene>
<reference key="1">
    <citation type="submission" date="2009-05" db="EMBL/GenBank/DDBJ databases">
        <title>Complete sequence of Tolumonas auensis DSM 9187.</title>
        <authorList>
            <consortium name="US DOE Joint Genome Institute"/>
            <person name="Lucas S."/>
            <person name="Copeland A."/>
            <person name="Lapidus A."/>
            <person name="Glavina del Rio T."/>
            <person name="Tice H."/>
            <person name="Bruce D."/>
            <person name="Goodwin L."/>
            <person name="Pitluck S."/>
            <person name="Chertkov O."/>
            <person name="Brettin T."/>
            <person name="Detter J.C."/>
            <person name="Han C."/>
            <person name="Larimer F."/>
            <person name="Land M."/>
            <person name="Hauser L."/>
            <person name="Kyrpides N."/>
            <person name="Mikhailova N."/>
            <person name="Spring S."/>
            <person name="Beller H."/>
        </authorList>
    </citation>
    <scope>NUCLEOTIDE SEQUENCE [LARGE SCALE GENOMIC DNA]</scope>
    <source>
        <strain>DSM 9187 / NBRC 110442 / TA 4</strain>
    </source>
</reference>
<protein>
    <recommendedName>
        <fullName evidence="1">Phenylalanine--tRNA ligase alpha subunit</fullName>
        <ecNumber evidence="1">6.1.1.20</ecNumber>
    </recommendedName>
    <alternativeName>
        <fullName evidence="1">Phenylalanyl-tRNA synthetase alpha subunit</fullName>
        <shortName evidence="1">PheRS</shortName>
    </alternativeName>
</protein>
<accession>C4LFG9</accession>
<evidence type="ECO:0000255" key="1">
    <source>
        <dbReference type="HAMAP-Rule" id="MF_00281"/>
    </source>
</evidence>
<proteinExistence type="inferred from homology"/>
<feature type="chain" id="PRO_1000204838" description="Phenylalanine--tRNA ligase alpha subunit">
    <location>
        <begin position="1"/>
        <end position="327"/>
    </location>
</feature>
<feature type="binding site" evidence="1">
    <location>
        <position position="252"/>
    </location>
    <ligand>
        <name>Mg(2+)</name>
        <dbReference type="ChEBI" id="CHEBI:18420"/>
        <note>shared with beta subunit</note>
    </ligand>
</feature>
<comment type="catalytic activity">
    <reaction evidence="1">
        <text>tRNA(Phe) + L-phenylalanine + ATP = L-phenylalanyl-tRNA(Phe) + AMP + diphosphate + H(+)</text>
        <dbReference type="Rhea" id="RHEA:19413"/>
        <dbReference type="Rhea" id="RHEA-COMP:9668"/>
        <dbReference type="Rhea" id="RHEA-COMP:9699"/>
        <dbReference type="ChEBI" id="CHEBI:15378"/>
        <dbReference type="ChEBI" id="CHEBI:30616"/>
        <dbReference type="ChEBI" id="CHEBI:33019"/>
        <dbReference type="ChEBI" id="CHEBI:58095"/>
        <dbReference type="ChEBI" id="CHEBI:78442"/>
        <dbReference type="ChEBI" id="CHEBI:78531"/>
        <dbReference type="ChEBI" id="CHEBI:456215"/>
        <dbReference type="EC" id="6.1.1.20"/>
    </reaction>
</comment>
<comment type="cofactor">
    <cofactor evidence="1">
        <name>Mg(2+)</name>
        <dbReference type="ChEBI" id="CHEBI:18420"/>
    </cofactor>
    <text evidence="1">Binds 2 magnesium ions per tetramer.</text>
</comment>
<comment type="subunit">
    <text evidence="1">Tetramer of two alpha and two beta subunits.</text>
</comment>
<comment type="subcellular location">
    <subcellularLocation>
        <location evidence="1">Cytoplasm</location>
    </subcellularLocation>
</comment>
<comment type="similarity">
    <text evidence="1">Belongs to the class-II aminoacyl-tRNA synthetase family. Phe-tRNA synthetase alpha subunit type 1 subfamily.</text>
</comment>
<name>SYFA_TOLAT</name>
<sequence>MQQLEEVVASALAKIAEATDNNALEALRVEYFGKKGVFTEQMKALAGLSPEERPAAGQLINQAKEKAQNALNERREALTTAELAKKLAAETIDVSLPGRRFENGGIHPVTRTIERIERIFGELGFSAEYGPEIEDDFHNFDALNIPGHHPARTDHDTFYFNPTLMLRTHTSGVQIRTMEKQQPPIRIIAPGRVYRNDYDQTHTPMFHQVEGLLVDENISFSNLKGILHDFLLNFFEEDLQIRFRPSYFPFTEPSAEVDVMGKNGRWLEVLGCGMVHPNVLRSVGIDPEKYSGFAFGMGVERLTMLRYGVNDLRAFFENDLRFLKQFK</sequence>
<organism>
    <name type="scientific">Tolumonas auensis (strain DSM 9187 / NBRC 110442 / TA 4)</name>
    <dbReference type="NCBI Taxonomy" id="595494"/>
    <lineage>
        <taxon>Bacteria</taxon>
        <taxon>Pseudomonadati</taxon>
        <taxon>Pseudomonadota</taxon>
        <taxon>Gammaproteobacteria</taxon>
        <taxon>Aeromonadales</taxon>
        <taxon>Aeromonadaceae</taxon>
        <taxon>Tolumonas</taxon>
    </lineage>
</organism>
<dbReference type="EC" id="6.1.1.20" evidence="1"/>
<dbReference type="EMBL" id="CP001616">
    <property type="protein sequence ID" value="ACQ93336.1"/>
    <property type="molecule type" value="Genomic_DNA"/>
</dbReference>
<dbReference type="RefSeq" id="WP_015878807.1">
    <property type="nucleotide sequence ID" value="NC_012691.1"/>
</dbReference>
<dbReference type="SMR" id="C4LFG9"/>
<dbReference type="STRING" id="595494.Tola_1726"/>
<dbReference type="KEGG" id="tau:Tola_1726"/>
<dbReference type="eggNOG" id="COG0016">
    <property type="taxonomic scope" value="Bacteria"/>
</dbReference>
<dbReference type="HOGENOM" id="CLU_025086_0_1_6"/>
<dbReference type="OrthoDB" id="9800719at2"/>
<dbReference type="Proteomes" id="UP000009073">
    <property type="component" value="Chromosome"/>
</dbReference>
<dbReference type="GO" id="GO:0005737">
    <property type="term" value="C:cytoplasm"/>
    <property type="evidence" value="ECO:0007669"/>
    <property type="project" value="UniProtKB-SubCell"/>
</dbReference>
<dbReference type="GO" id="GO:0005524">
    <property type="term" value="F:ATP binding"/>
    <property type="evidence" value="ECO:0007669"/>
    <property type="project" value="UniProtKB-UniRule"/>
</dbReference>
<dbReference type="GO" id="GO:0000287">
    <property type="term" value="F:magnesium ion binding"/>
    <property type="evidence" value="ECO:0007669"/>
    <property type="project" value="UniProtKB-UniRule"/>
</dbReference>
<dbReference type="GO" id="GO:0004826">
    <property type="term" value="F:phenylalanine-tRNA ligase activity"/>
    <property type="evidence" value="ECO:0007669"/>
    <property type="project" value="UniProtKB-UniRule"/>
</dbReference>
<dbReference type="GO" id="GO:0000049">
    <property type="term" value="F:tRNA binding"/>
    <property type="evidence" value="ECO:0007669"/>
    <property type="project" value="InterPro"/>
</dbReference>
<dbReference type="GO" id="GO:0006432">
    <property type="term" value="P:phenylalanyl-tRNA aminoacylation"/>
    <property type="evidence" value="ECO:0007669"/>
    <property type="project" value="UniProtKB-UniRule"/>
</dbReference>
<dbReference type="CDD" id="cd00496">
    <property type="entry name" value="PheRS_alpha_core"/>
    <property type="match status" value="1"/>
</dbReference>
<dbReference type="FunFam" id="3.30.930.10:FF:000003">
    <property type="entry name" value="Phenylalanine--tRNA ligase alpha subunit"/>
    <property type="match status" value="1"/>
</dbReference>
<dbReference type="Gene3D" id="3.30.930.10">
    <property type="entry name" value="Bira Bifunctional Protein, Domain 2"/>
    <property type="match status" value="1"/>
</dbReference>
<dbReference type="HAMAP" id="MF_00281">
    <property type="entry name" value="Phe_tRNA_synth_alpha1"/>
    <property type="match status" value="1"/>
</dbReference>
<dbReference type="InterPro" id="IPR006195">
    <property type="entry name" value="aa-tRNA-synth_II"/>
</dbReference>
<dbReference type="InterPro" id="IPR045864">
    <property type="entry name" value="aa-tRNA-synth_II/BPL/LPL"/>
</dbReference>
<dbReference type="InterPro" id="IPR004529">
    <property type="entry name" value="Phe-tRNA-synth_IIc_asu"/>
</dbReference>
<dbReference type="InterPro" id="IPR004188">
    <property type="entry name" value="Phe-tRNA_ligase_II_N"/>
</dbReference>
<dbReference type="InterPro" id="IPR022911">
    <property type="entry name" value="Phe_tRNA_ligase_alpha1_bac"/>
</dbReference>
<dbReference type="InterPro" id="IPR002319">
    <property type="entry name" value="Phenylalanyl-tRNA_Synthase"/>
</dbReference>
<dbReference type="InterPro" id="IPR010978">
    <property type="entry name" value="tRNA-bd_arm"/>
</dbReference>
<dbReference type="NCBIfam" id="TIGR00468">
    <property type="entry name" value="pheS"/>
    <property type="match status" value="1"/>
</dbReference>
<dbReference type="PANTHER" id="PTHR11538:SF41">
    <property type="entry name" value="PHENYLALANINE--TRNA LIGASE, MITOCHONDRIAL"/>
    <property type="match status" value="1"/>
</dbReference>
<dbReference type="PANTHER" id="PTHR11538">
    <property type="entry name" value="PHENYLALANYL-TRNA SYNTHETASE"/>
    <property type="match status" value="1"/>
</dbReference>
<dbReference type="Pfam" id="PF02912">
    <property type="entry name" value="Phe_tRNA-synt_N"/>
    <property type="match status" value="1"/>
</dbReference>
<dbReference type="Pfam" id="PF01409">
    <property type="entry name" value="tRNA-synt_2d"/>
    <property type="match status" value="1"/>
</dbReference>
<dbReference type="SUPFAM" id="SSF55681">
    <property type="entry name" value="Class II aaRS and biotin synthetases"/>
    <property type="match status" value="1"/>
</dbReference>
<dbReference type="SUPFAM" id="SSF46589">
    <property type="entry name" value="tRNA-binding arm"/>
    <property type="match status" value="1"/>
</dbReference>
<dbReference type="PROSITE" id="PS50862">
    <property type="entry name" value="AA_TRNA_LIGASE_II"/>
    <property type="match status" value="1"/>
</dbReference>
<keyword id="KW-0030">Aminoacyl-tRNA synthetase</keyword>
<keyword id="KW-0067">ATP-binding</keyword>
<keyword id="KW-0963">Cytoplasm</keyword>
<keyword id="KW-0436">Ligase</keyword>
<keyword id="KW-0460">Magnesium</keyword>
<keyword id="KW-0479">Metal-binding</keyword>
<keyword id="KW-0547">Nucleotide-binding</keyword>
<keyword id="KW-0648">Protein biosynthesis</keyword>
<keyword id="KW-1185">Reference proteome</keyword>